<name>RSMA_HAEIG</name>
<evidence type="ECO:0000255" key="1">
    <source>
        <dbReference type="HAMAP-Rule" id="MF_00607"/>
    </source>
</evidence>
<gene>
    <name evidence="1" type="primary">rsmA</name>
    <name evidence="1" type="synonym">ksgA</name>
    <name type="ordered locus">CGSHiGG_06020</name>
</gene>
<sequence>MNSKKHLGHTARKRFGQNFLHDTSVIQGIVAAIYPQPNQFLVEIGPGLGALTEPVGELVDHLTVVELDRDLAERLRHHPFLHQKLTVIETDAMQFDFGALYTKENLAEKGQKLRVFGNLPYNISTPLMFHLFKYHDVIQDMHFMLQKEVVKRLCAAPNSKAYGRLTIMAQYFCQVMPVLEVPPSAFKPAPKVDSAVVRLIPHKELPHPVKDLYWLNRVCSQAFNQRRKTLRNALSTLFSPENLTALGIDLNARAENLAIADYARLANWLADNPPADINKDEILDSEE</sequence>
<protein>
    <recommendedName>
        <fullName evidence="1">Ribosomal RNA small subunit methyltransferase A</fullName>
        <ecNumber evidence="1">2.1.1.182</ecNumber>
    </recommendedName>
    <alternativeName>
        <fullName evidence="1">16S rRNA (adenine(1518)-N(6)/adenine(1519)-N(6))-dimethyltransferase</fullName>
    </alternativeName>
    <alternativeName>
        <fullName evidence="1">16S rRNA dimethyladenosine transferase</fullName>
    </alternativeName>
    <alternativeName>
        <fullName evidence="1">16S rRNA dimethylase</fullName>
    </alternativeName>
    <alternativeName>
        <fullName evidence="1">S-adenosylmethionine-6-N', N'-adenosyl(rRNA) dimethyltransferase</fullName>
    </alternativeName>
</protein>
<accession>A5UH57</accession>
<keyword id="KW-0963">Cytoplasm</keyword>
<keyword id="KW-0489">Methyltransferase</keyword>
<keyword id="KW-0694">RNA-binding</keyword>
<keyword id="KW-0698">rRNA processing</keyword>
<keyword id="KW-0949">S-adenosyl-L-methionine</keyword>
<keyword id="KW-0808">Transferase</keyword>
<comment type="function">
    <text evidence="1">Specifically dimethylates two adjacent adenosines (A1518 and A1519) in the loop of a conserved hairpin near the 3'-end of 16S rRNA in the 30S particle. May play a critical role in biogenesis of 30S subunits.</text>
</comment>
<comment type="catalytic activity">
    <reaction evidence="1">
        <text>adenosine(1518)/adenosine(1519) in 16S rRNA + 4 S-adenosyl-L-methionine = N(6)-dimethyladenosine(1518)/N(6)-dimethyladenosine(1519) in 16S rRNA + 4 S-adenosyl-L-homocysteine + 4 H(+)</text>
        <dbReference type="Rhea" id="RHEA:19609"/>
        <dbReference type="Rhea" id="RHEA-COMP:10232"/>
        <dbReference type="Rhea" id="RHEA-COMP:10233"/>
        <dbReference type="ChEBI" id="CHEBI:15378"/>
        <dbReference type="ChEBI" id="CHEBI:57856"/>
        <dbReference type="ChEBI" id="CHEBI:59789"/>
        <dbReference type="ChEBI" id="CHEBI:74411"/>
        <dbReference type="ChEBI" id="CHEBI:74493"/>
        <dbReference type="EC" id="2.1.1.182"/>
    </reaction>
</comment>
<comment type="subcellular location">
    <subcellularLocation>
        <location evidence="1">Cytoplasm</location>
    </subcellularLocation>
</comment>
<comment type="similarity">
    <text evidence="1">Belongs to the class I-like SAM-binding methyltransferase superfamily. rRNA adenine N(6)-methyltransferase family. RsmA subfamily.</text>
</comment>
<feature type="chain" id="PRO_1000056624" description="Ribosomal RNA small subunit methyltransferase A">
    <location>
        <begin position="1"/>
        <end position="287"/>
    </location>
</feature>
<feature type="binding site" evidence="1">
    <location>
        <position position="18"/>
    </location>
    <ligand>
        <name>S-adenosyl-L-methionine</name>
        <dbReference type="ChEBI" id="CHEBI:59789"/>
    </ligand>
</feature>
<feature type="binding site" evidence="1">
    <location>
        <position position="20"/>
    </location>
    <ligand>
        <name>S-adenosyl-L-methionine</name>
        <dbReference type="ChEBI" id="CHEBI:59789"/>
    </ligand>
</feature>
<feature type="binding site" evidence="1">
    <location>
        <position position="45"/>
    </location>
    <ligand>
        <name>S-adenosyl-L-methionine</name>
        <dbReference type="ChEBI" id="CHEBI:59789"/>
    </ligand>
</feature>
<feature type="binding site" evidence="1">
    <location>
        <position position="66"/>
    </location>
    <ligand>
        <name>S-adenosyl-L-methionine</name>
        <dbReference type="ChEBI" id="CHEBI:59789"/>
    </ligand>
</feature>
<feature type="binding site" evidence="1">
    <location>
        <position position="91"/>
    </location>
    <ligand>
        <name>S-adenosyl-L-methionine</name>
        <dbReference type="ChEBI" id="CHEBI:59789"/>
    </ligand>
</feature>
<feature type="binding site" evidence="1">
    <location>
        <position position="118"/>
    </location>
    <ligand>
        <name>S-adenosyl-L-methionine</name>
        <dbReference type="ChEBI" id="CHEBI:59789"/>
    </ligand>
</feature>
<organism>
    <name type="scientific">Haemophilus influenzae (strain PittGG)</name>
    <dbReference type="NCBI Taxonomy" id="374931"/>
    <lineage>
        <taxon>Bacteria</taxon>
        <taxon>Pseudomonadati</taxon>
        <taxon>Pseudomonadota</taxon>
        <taxon>Gammaproteobacteria</taxon>
        <taxon>Pasteurellales</taxon>
        <taxon>Pasteurellaceae</taxon>
        <taxon>Haemophilus</taxon>
    </lineage>
</organism>
<proteinExistence type="inferred from homology"/>
<dbReference type="EC" id="2.1.1.182" evidence="1"/>
<dbReference type="EMBL" id="CP000672">
    <property type="protein sequence ID" value="ABR00113.1"/>
    <property type="molecule type" value="Genomic_DNA"/>
</dbReference>
<dbReference type="SMR" id="A5UH57"/>
<dbReference type="KEGG" id="hiq:CGSHiGG_06020"/>
<dbReference type="HOGENOM" id="CLU_041220_0_1_6"/>
<dbReference type="Proteomes" id="UP000001990">
    <property type="component" value="Chromosome"/>
</dbReference>
<dbReference type="GO" id="GO:0005829">
    <property type="term" value="C:cytosol"/>
    <property type="evidence" value="ECO:0007669"/>
    <property type="project" value="TreeGrafter"/>
</dbReference>
<dbReference type="GO" id="GO:0052908">
    <property type="term" value="F:16S rRNA (adenine(1518)-N(6)/adenine(1519)-N(6))-dimethyltransferase activity"/>
    <property type="evidence" value="ECO:0007669"/>
    <property type="project" value="UniProtKB-EC"/>
</dbReference>
<dbReference type="GO" id="GO:0003723">
    <property type="term" value="F:RNA binding"/>
    <property type="evidence" value="ECO:0007669"/>
    <property type="project" value="UniProtKB-KW"/>
</dbReference>
<dbReference type="FunFam" id="1.10.8.100:FF:000001">
    <property type="entry name" value="Ribosomal RNA small subunit methyltransferase A"/>
    <property type="match status" value="1"/>
</dbReference>
<dbReference type="FunFam" id="3.40.50.150:FF:000006">
    <property type="entry name" value="Ribosomal RNA small subunit methyltransferase A"/>
    <property type="match status" value="1"/>
</dbReference>
<dbReference type="Gene3D" id="1.10.8.100">
    <property type="entry name" value="Ribosomal RNA adenine dimethylase-like, domain 2"/>
    <property type="match status" value="1"/>
</dbReference>
<dbReference type="Gene3D" id="3.40.50.150">
    <property type="entry name" value="Vaccinia Virus protein VP39"/>
    <property type="match status" value="1"/>
</dbReference>
<dbReference type="HAMAP" id="MF_00607">
    <property type="entry name" value="16SrRNA_methyltr_A"/>
    <property type="match status" value="1"/>
</dbReference>
<dbReference type="InterPro" id="IPR001737">
    <property type="entry name" value="KsgA/Erm"/>
</dbReference>
<dbReference type="InterPro" id="IPR023165">
    <property type="entry name" value="rRNA_Ade_diMease-like_C"/>
</dbReference>
<dbReference type="InterPro" id="IPR020596">
    <property type="entry name" value="rRNA_Ade_Mease_Trfase_CS"/>
</dbReference>
<dbReference type="InterPro" id="IPR020598">
    <property type="entry name" value="rRNA_Ade_methylase_Trfase_N"/>
</dbReference>
<dbReference type="InterPro" id="IPR011530">
    <property type="entry name" value="rRNA_adenine_dimethylase"/>
</dbReference>
<dbReference type="InterPro" id="IPR029063">
    <property type="entry name" value="SAM-dependent_MTases_sf"/>
</dbReference>
<dbReference type="NCBIfam" id="TIGR00755">
    <property type="entry name" value="ksgA"/>
    <property type="match status" value="1"/>
</dbReference>
<dbReference type="PANTHER" id="PTHR11727">
    <property type="entry name" value="DIMETHYLADENOSINE TRANSFERASE"/>
    <property type="match status" value="1"/>
</dbReference>
<dbReference type="PANTHER" id="PTHR11727:SF7">
    <property type="entry name" value="DIMETHYLADENOSINE TRANSFERASE-RELATED"/>
    <property type="match status" value="1"/>
</dbReference>
<dbReference type="Pfam" id="PF00398">
    <property type="entry name" value="RrnaAD"/>
    <property type="match status" value="1"/>
</dbReference>
<dbReference type="SMART" id="SM00650">
    <property type="entry name" value="rADc"/>
    <property type="match status" value="1"/>
</dbReference>
<dbReference type="SUPFAM" id="SSF53335">
    <property type="entry name" value="S-adenosyl-L-methionine-dependent methyltransferases"/>
    <property type="match status" value="1"/>
</dbReference>
<dbReference type="PROSITE" id="PS01131">
    <property type="entry name" value="RRNA_A_DIMETH"/>
    <property type="match status" value="1"/>
</dbReference>
<dbReference type="PROSITE" id="PS51689">
    <property type="entry name" value="SAM_RNA_A_N6_MT"/>
    <property type="match status" value="1"/>
</dbReference>
<reference key="1">
    <citation type="journal article" date="2007" name="Genome Biol.">
        <title>Characterization and modeling of the Haemophilus influenzae core and supragenomes based on the complete genomic sequences of Rd and 12 clinical nontypeable strains.</title>
        <authorList>
            <person name="Hogg J.S."/>
            <person name="Hu F.Z."/>
            <person name="Janto B."/>
            <person name="Boissy R."/>
            <person name="Hayes J."/>
            <person name="Keefe R."/>
            <person name="Post J.C."/>
            <person name="Ehrlich G.D."/>
        </authorList>
    </citation>
    <scope>NUCLEOTIDE SEQUENCE [LARGE SCALE GENOMIC DNA]</scope>
    <source>
        <strain>PittGG</strain>
    </source>
</reference>